<name>RLMN_PARPJ</name>
<sequence length="383" mass="41783">MTSSPTVNLLDLDAQGLVAYCDSLGEKPFRAKQLQRWIHQYNAADFDGMTDLAKSLREKLKGRATISMPGIVSDNISTDGTRKWLIDVGNSNAVETVYIPEETRGTLCVSSQAGCAVNCRFCSTGKQGFSRNLTTAEIIGQLRMAEFALRASRGIDGGRATGGDGKGERVVTNVVMMGMGEPLLNYDAVVPAMRLMLDDNAYGLSRRRVTLSTSGVVPMMDRLGADLPVALAVSLHAPSDPLRDMLVPLNKKYPLRELMAACQRYLKVAPRDFITFEYCMLDGVNDSEAQARELLALTRDVPCKFNLIPFNPFPESGLIRSKPEQIKRFAQVLMDAGVVTTVRKTRGDDIDAACGQLAGAVKDRTRLAERTGKAAKVIEVRAV</sequence>
<proteinExistence type="inferred from homology"/>
<comment type="function">
    <text evidence="1">Specifically methylates position 2 of adenine 2503 in 23S rRNA and position 2 of adenine 37 in tRNAs. m2A2503 modification seems to play a crucial role in the proofreading step occurring at the peptidyl transferase center and thus would serve to optimize ribosomal fidelity.</text>
</comment>
<comment type="catalytic activity">
    <reaction evidence="1">
        <text>adenosine(2503) in 23S rRNA + 2 reduced [2Fe-2S]-[ferredoxin] + 2 S-adenosyl-L-methionine = 2-methyladenosine(2503) in 23S rRNA + 5'-deoxyadenosine + L-methionine + 2 oxidized [2Fe-2S]-[ferredoxin] + S-adenosyl-L-homocysteine</text>
        <dbReference type="Rhea" id="RHEA:42916"/>
        <dbReference type="Rhea" id="RHEA-COMP:10000"/>
        <dbReference type="Rhea" id="RHEA-COMP:10001"/>
        <dbReference type="Rhea" id="RHEA-COMP:10152"/>
        <dbReference type="Rhea" id="RHEA-COMP:10282"/>
        <dbReference type="ChEBI" id="CHEBI:17319"/>
        <dbReference type="ChEBI" id="CHEBI:33737"/>
        <dbReference type="ChEBI" id="CHEBI:33738"/>
        <dbReference type="ChEBI" id="CHEBI:57844"/>
        <dbReference type="ChEBI" id="CHEBI:57856"/>
        <dbReference type="ChEBI" id="CHEBI:59789"/>
        <dbReference type="ChEBI" id="CHEBI:74411"/>
        <dbReference type="ChEBI" id="CHEBI:74497"/>
        <dbReference type="EC" id="2.1.1.192"/>
    </reaction>
</comment>
<comment type="catalytic activity">
    <reaction evidence="1">
        <text>adenosine(37) in tRNA + 2 reduced [2Fe-2S]-[ferredoxin] + 2 S-adenosyl-L-methionine = 2-methyladenosine(37) in tRNA + 5'-deoxyadenosine + L-methionine + 2 oxidized [2Fe-2S]-[ferredoxin] + S-adenosyl-L-homocysteine</text>
        <dbReference type="Rhea" id="RHEA:43332"/>
        <dbReference type="Rhea" id="RHEA-COMP:10000"/>
        <dbReference type="Rhea" id="RHEA-COMP:10001"/>
        <dbReference type="Rhea" id="RHEA-COMP:10162"/>
        <dbReference type="Rhea" id="RHEA-COMP:10485"/>
        <dbReference type="ChEBI" id="CHEBI:17319"/>
        <dbReference type="ChEBI" id="CHEBI:33737"/>
        <dbReference type="ChEBI" id="CHEBI:33738"/>
        <dbReference type="ChEBI" id="CHEBI:57844"/>
        <dbReference type="ChEBI" id="CHEBI:57856"/>
        <dbReference type="ChEBI" id="CHEBI:59789"/>
        <dbReference type="ChEBI" id="CHEBI:74411"/>
        <dbReference type="ChEBI" id="CHEBI:74497"/>
        <dbReference type="EC" id="2.1.1.192"/>
    </reaction>
</comment>
<comment type="cofactor">
    <cofactor evidence="1">
        <name>[4Fe-4S] cluster</name>
        <dbReference type="ChEBI" id="CHEBI:49883"/>
    </cofactor>
    <text evidence="1">Binds 1 [4Fe-4S] cluster. The cluster is coordinated with 3 cysteines and an exchangeable S-adenosyl-L-methionine.</text>
</comment>
<comment type="subcellular location">
    <subcellularLocation>
        <location evidence="1">Cytoplasm</location>
    </subcellularLocation>
</comment>
<comment type="miscellaneous">
    <text evidence="1">Reaction proceeds by a ping-pong mechanism involving intermediate methylation of a conserved cysteine residue.</text>
</comment>
<comment type="similarity">
    <text evidence="1">Belongs to the radical SAM superfamily. RlmN family.</text>
</comment>
<dbReference type="EC" id="2.1.1.192" evidence="1"/>
<dbReference type="EMBL" id="CP001052">
    <property type="protein sequence ID" value="ACD16938.1"/>
    <property type="molecule type" value="Genomic_DNA"/>
</dbReference>
<dbReference type="RefSeq" id="WP_012433532.1">
    <property type="nucleotide sequence ID" value="NC_010681.1"/>
</dbReference>
<dbReference type="SMR" id="B2SXT2"/>
<dbReference type="STRING" id="398527.Bphyt_2543"/>
<dbReference type="KEGG" id="bpy:Bphyt_2543"/>
<dbReference type="eggNOG" id="COG0820">
    <property type="taxonomic scope" value="Bacteria"/>
</dbReference>
<dbReference type="HOGENOM" id="CLU_029101_0_0_4"/>
<dbReference type="OrthoDB" id="9793973at2"/>
<dbReference type="Proteomes" id="UP000001739">
    <property type="component" value="Chromosome 1"/>
</dbReference>
<dbReference type="GO" id="GO:0005737">
    <property type="term" value="C:cytoplasm"/>
    <property type="evidence" value="ECO:0007669"/>
    <property type="project" value="UniProtKB-SubCell"/>
</dbReference>
<dbReference type="GO" id="GO:0051539">
    <property type="term" value="F:4 iron, 4 sulfur cluster binding"/>
    <property type="evidence" value="ECO:0007669"/>
    <property type="project" value="UniProtKB-UniRule"/>
</dbReference>
<dbReference type="GO" id="GO:0046872">
    <property type="term" value="F:metal ion binding"/>
    <property type="evidence" value="ECO:0007669"/>
    <property type="project" value="UniProtKB-KW"/>
</dbReference>
<dbReference type="GO" id="GO:0070040">
    <property type="term" value="F:rRNA (adenine(2503)-C2-)-methyltransferase activity"/>
    <property type="evidence" value="ECO:0007669"/>
    <property type="project" value="UniProtKB-UniRule"/>
</dbReference>
<dbReference type="GO" id="GO:0019843">
    <property type="term" value="F:rRNA binding"/>
    <property type="evidence" value="ECO:0007669"/>
    <property type="project" value="UniProtKB-UniRule"/>
</dbReference>
<dbReference type="GO" id="GO:0002935">
    <property type="term" value="F:tRNA (adenine(37)-C2)-methyltransferase activity"/>
    <property type="evidence" value="ECO:0007669"/>
    <property type="project" value="UniProtKB-UniRule"/>
</dbReference>
<dbReference type="GO" id="GO:0000049">
    <property type="term" value="F:tRNA binding"/>
    <property type="evidence" value="ECO:0007669"/>
    <property type="project" value="UniProtKB-UniRule"/>
</dbReference>
<dbReference type="GO" id="GO:0070475">
    <property type="term" value="P:rRNA base methylation"/>
    <property type="evidence" value="ECO:0007669"/>
    <property type="project" value="UniProtKB-UniRule"/>
</dbReference>
<dbReference type="GO" id="GO:0030488">
    <property type="term" value="P:tRNA methylation"/>
    <property type="evidence" value="ECO:0007669"/>
    <property type="project" value="UniProtKB-UniRule"/>
</dbReference>
<dbReference type="CDD" id="cd01335">
    <property type="entry name" value="Radical_SAM"/>
    <property type="match status" value="1"/>
</dbReference>
<dbReference type="FunFam" id="1.10.150.530:FF:000003">
    <property type="entry name" value="Dual-specificity RNA methyltransferase RlmN"/>
    <property type="match status" value="1"/>
</dbReference>
<dbReference type="FunFam" id="3.20.20.70:FF:000008">
    <property type="entry name" value="Dual-specificity RNA methyltransferase RlmN"/>
    <property type="match status" value="1"/>
</dbReference>
<dbReference type="Gene3D" id="1.10.150.530">
    <property type="match status" value="1"/>
</dbReference>
<dbReference type="Gene3D" id="3.20.20.70">
    <property type="entry name" value="Aldolase class I"/>
    <property type="match status" value="1"/>
</dbReference>
<dbReference type="HAMAP" id="MF_01849">
    <property type="entry name" value="RNA_methyltr_RlmN"/>
    <property type="match status" value="1"/>
</dbReference>
<dbReference type="InterPro" id="IPR013785">
    <property type="entry name" value="Aldolase_TIM"/>
</dbReference>
<dbReference type="InterPro" id="IPR040072">
    <property type="entry name" value="Methyltransferase_A"/>
</dbReference>
<dbReference type="InterPro" id="IPR048641">
    <property type="entry name" value="RlmN_N"/>
</dbReference>
<dbReference type="InterPro" id="IPR027492">
    <property type="entry name" value="RNA_MTrfase_RlmN"/>
</dbReference>
<dbReference type="InterPro" id="IPR004383">
    <property type="entry name" value="rRNA_lsu_MTrfase_RlmN/Cfr"/>
</dbReference>
<dbReference type="InterPro" id="IPR007197">
    <property type="entry name" value="rSAM"/>
</dbReference>
<dbReference type="NCBIfam" id="TIGR00048">
    <property type="entry name" value="rRNA_mod_RlmN"/>
    <property type="match status" value="1"/>
</dbReference>
<dbReference type="PANTHER" id="PTHR30544">
    <property type="entry name" value="23S RRNA METHYLTRANSFERASE"/>
    <property type="match status" value="1"/>
</dbReference>
<dbReference type="PANTHER" id="PTHR30544:SF5">
    <property type="entry name" value="RADICAL SAM CORE DOMAIN-CONTAINING PROTEIN"/>
    <property type="match status" value="1"/>
</dbReference>
<dbReference type="Pfam" id="PF04055">
    <property type="entry name" value="Radical_SAM"/>
    <property type="match status" value="1"/>
</dbReference>
<dbReference type="Pfam" id="PF21016">
    <property type="entry name" value="RlmN_N"/>
    <property type="match status" value="1"/>
</dbReference>
<dbReference type="PIRSF" id="PIRSF006004">
    <property type="entry name" value="CHP00048"/>
    <property type="match status" value="1"/>
</dbReference>
<dbReference type="SFLD" id="SFLDF00275">
    <property type="entry name" value="adenosine_C2_methyltransferase"/>
    <property type="match status" value="1"/>
</dbReference>
<dbReference type="SFLD" id="SFLDG01062">
    <property type="entry name" value="methyltransferase_(Class_A)"/>
    <property type="match status" value="1"/>
</dbReference>
<dbReference type="SUPFAM" id="SSF102114">
    <property type="entry name" value="Radical SAM enzymes"/>
    <property type="match status" value="1"/>
</dbReference>
<dbReference type="PROSITE" id="PS51918">
    <property type="entry name" value="RADICAL_SAM"/>
    <property type="match status" value="1"/>
</dbReference>
<reference key="1">
    <citation type="journal article" date="2011" name="J. Bacteriol.">
        <title>Complete genome sequence of the plant growth-promoting endophyte Burkholderia phytofirmans strain PsJN.</title>
        <authorList>
            <person name="Weilharter A."/>
            <person name="Mitter B."/>
            <person name="Shin M.V."/>
            <person name="Chain P.S."/>
            <person name="Nowak J."/>
            <person name="Sessitsch A."/>
        </authorList>
    </citation>
    <scope>NUCLEOTIDE SEQUENCE [LARGE SCALE GENOMIC DNA]</scope>
    <source>
        <strain>DSM 17436 / LMG 22146 / PsJN</strain>
    </source>
</reference>
<organism>
    <name type="scientific">Paraburkholderia phytofirmans (strain DSM 17436 / LMG 22146 / PsJN)</name>
    <name type="common">Burkholderia phytofirmans</name>
    <dbReference type="NCBI Taxonomy" id="398527"/>
    <lineage>
        <taxon>Bacteria</taxon>
        <taxon>Pseudomonadati</taxon>
        <taxon>Pseudomonadota</taxon>
        <taxon>Betaproteobacteria</taxon>
        <taxon>Burkholderiales</taxon>
        <taxon>Burkholderiaceae</taxon>
        <taxon>Paraburkholderia</taxon>
    </lineage>
</organism>
<keyword id="KW-0004">4Fe-4S</keyword>
<keyword id="KW-0963">Cytoplasm</keyword>
<keyword id="KW-1015">Disulfide bond</keyword>
<keyword id="KW-0408">Iron</keyword>
<keyword id="KW-0411">Iron-sulfur</keyword>
<keyword id="KW-0479">Metal-binding</keyword>
<keyword id="KW-0489">Methyltransferase</keyword>
<keyword id="KW-0698">rRNA processing</keyword>
<keyword id="KW-0949">S-adenosyl-L-methionine</keyword>
<keyword id="KW-0808">Transferase</keyword>
<keyword id="KW-0819">tRNA processing</keyword>
<accession>B2SXT2</accession>
<evidence type="ECO:0000255" key="1">
    <source>
        <dbReference type="HAMAP-Rule" id="MF_01849"/>
    </source>
</evidence>
<evidence type="ECO:0000255" key="2">
    <source>
        <dbReference type="PROSITE-ProRule" id="PRU01266"/>
    </source>
</evidence>
<feature type="chain" id="PRO_0000350080" description="Dual-specificity RNA methyltransferase RlmN">
    <location>
        <begin position="1"/>
        <end position="383"/>
    </location>
</feature>
<feature type="domain" description="Radical SAM core" evidence="2">
    <location>
        <begin position="101"/>
        <end position="349"/>
    </location>
</feature>
<feature type="active site" description="Proton acceptor" evidence="1">
    <location>
        <position position="95"/>
    </location>
</feature>
<feature type="active site" description="S-methylcysteine intermediate" evidence="1">
    <location>
        <position position="354"/>
    </location>
</feature>
<feature type="binding site" evidence="1">
    <location>
        <position position="115"/>
    </location>
    <ligand>
        <name>[4Fe-4S] cluster</name>
        <dbReference type="ChEBI" id="CHEBI:49883"/>
        <note>4Fe-4S-S-AdoMet</note>
    </ligand>
</feature>
<feature type="binding site" evidence="1">
    <location>
        <position position="119"/>
    </location>
    <ligand>
        <name>[4Fe-4S] cluster</name>
        <dbReference type="ChEBI" id="CHEBI:49883"/>
        <note>4Fe-4S-S-AdoMet</note>
    </ligand>
</feature>
<feature type="binding site" evidence="1">
    <location>
        <position position="122"/>
    </location>
    <ligand>
        <name>[4Fe-4S] cluster</name>
        <dbReference type="ChEBI" id="CHEBI:49883"/>
        <note>4Fe-4S-S-AdoMet</note>
    </ligand>
</feature>
<feature type="binding site" evidence="1">
    <location>
        <begin position="180"/>
        <end position="181"/>
    </location>
    <ligand>
        <name>S-adenosyl-L-methionine</name>
        <dbReference type="ChEBI" id="CHEBI:59789"/>
    </ligand>
</feature>
<feature type="binding site" evidence="1">
    <location>
        <position position="212"/>
    </location>
    <ligand>
        <name>S-adenosyl-L-methionine</name>
        <dbReference type="ChEBI" id="CHEBI:59789"/>
    </ligand>
</feature>
<feature type="binding site" evidence="1">
    <location>
        <begin position="234"/>
        <end position="236"/>
    </location>
    <ligand>
        <name>S-adenosyl-L-methionine</name>
        <dbReference type="ChEBI" id="CHEBI:59789"/>
    </ligand>
</feature>
<feature type="binding site" evidence="1">
    <location>
        <position position="311"/>
    </location>
    <ligand>
        <name>S-adenosyl-L-methionine</name>
        <dbReference type="ChEBI" id="CHEBI:59789"/>
    </ligand>
</feature>
<feature type="disulfide bond" description="(transient)" evidence="1">
    <location>
        <begin position="108"/>
        <end position="354"/>
    </location>
</feature>
<protein>
    <recommendedName>
        <fullName evidence="1">Dual-specificity RNA methyltransferase RlmN</fullName>
        <ecNumber evidence="1">2.1.1.192</ecNumber>
    </recommendedName>
    <alternativeName>
        <fullName evidence="1">23S rRNA (adenine(2503)-C(2))-methyltransferase</fullName>
    </alternativeName>
    <alternativeName>
        <fullName evidence="1">23S rRNA m2A2503 methyltransferase</fullName>
    </alternativeName>
    <alternativeName>
        <fullName evidence="1">Ribosomal RNA large subunit methyltransferase N</fullName>
    </alternativeName>
    <alternativeName>
        <fullName evidence="1">tRNA (adenine(37)-C(2))-methyltransferase</fullName>
    </alternativeName>
    <alternativeName>
        <fullName evidence="1">tRNA m2A37 methyltransferase</fullName>
    </alternativeName>
</protein>
<gene>
    <name evidence="1" type="primary">rlmN</name>
    <name type="ordered locus">Bphyt_2543</name>
</gene>